<proteinExistence type="inferred from homology"/>
<dbReference type="EMBL" id="AE016825">
    <property type="protein sequence ID" value="AAQ58048.1"/>
    <property type="molecule type" value="Genomic_DNA"/>
</dbReference>
<dbReference type="RefSeq" id="WP_011133925.1">
    <property type="nucleotide sequence ID" value="NC_005085.1"/>
</dbReference>
<dbReference type="SMR" id="Q7P144"/>
<dbReference type="STRING" id="243365.CV_0370"/>
<dbReference type="GeneID" id="66365736"/>
<dbReference type="KEGG" id="cvi:CV_0370"/>
<dbReference type="eggNOG" id="COG1781">
    <property type="taxonomic scope" value="Bacteria"/>
</dbReference>
<dbReference type="HOGENOM" id="CLU_128576_0_0_4"/>
<dbReference type="OrthoDB" id="5599321at2"/>
<dbReference type="Proteomes" id="UP000001424">
    <property type="component" value="Chromosome"/>
</dbReference>
<dbReference type="GO" id="GO:0009347">
    <property type="term" value="C:aspartate carbamoyltransferase complex"/>
    <property type="evidence" value="ECO:0007669"/>
    <property type="project" value="InterPro"/>
</dbReference>
<dbReference type="GO" id="GO:0046872">
    <property type="term" value="F:metal ion binding"/>
    <property type="evidence" value="ECO:0007669"/>
    <property type="project" value="UniProtKB-KW"/>
</dbReference>
<dbReference type="GO" id="GO:0006207">
    <property type="term" value="P:'de novo' pyrimidine nucleobase biosynthetic process"/>
    <property type="evidence" value="ECO:0007669"/>
    <property type="project" value="InterPro"/>
</dbReference>
<dbReference type="GO" id="GO:0006221">
    <property type="term" value="P:pyrimidine nucleotide biosynthetic process"/>
    <property type="evidence" value="ECO:0007669"/>
    <property type="project" value="UniProtKB-UniRule"/>
</dbReference>
<dbReference type="Gene3D" id="2.30.30.20">
    <property type="entry name" value="Aspartate carbamoyltransferase regulatory subunit, C-terminal domain"/>
    <property type="match status" value="1"/>
</dbReference>
<dbReference type="Gene3D" id="3.30.70.140">
    <property type="entry name" value="Aspartate carbamoyltransferase regulatory subunit, N-terminal domain"/>
    <property type="match status" value="1"/>
</dbReference>
<dbReference type="HAMAP" id="MF_00002">
    <property type="entry name" value="Asp_carb_tr_reg"/>
    <property type="match status" value="1"/>
</dbReference>
<dbReference type="InterPro" id="IPR020545">
    <property type="entry name" value="Asp_carbamoyltransf_reg_N"/>
</dbReference>
<dbReference type="InterPro" id="IPR002801">
    <property type="entry name" value="Asp_carbamoylTrfase_reg"/>
</dbReference>
<dbReference type="InterPro" id="IPR020542">
    <property type="entry name" value="Asp_carbamoyltrfase_reg_C"/>
</dbReference>
<dbReference type="InterPro" id="IPR036792">
    <property type="entry name" value="Asp_carbatrfase_reg_C_sf"/>
</dbReference>
<dbReference type="InterPro" id="IPR036793">
    <property type="entry name" value="Asp_carbatrfase_reg_N_sf"/>
</dbReference>
<dbReference type="NCBIfam" id="TIGR00240">
    <property type="entry name" value="ATCase_reg"/>
    <property type="match status" value="1"/>
</dbReference>
<dbReference type="PANTHER" id="PTHR35805">
    <property type="entry name" value="ASPARTATE CARBAMOYLTRANSFERASE REGULATORY CHAIN"/>
    <property type="match status" value="1"/>
</dbReference>
<dbReference type="PANTHER" id="PTHR35805:SF1">
    <property type="entry name" value="ASPARTATE CARBAMOYLTRANSFERASE REGULATORY CHAIN"/>
    <property type="match status" value="1"/>
</dbReference>
<dbReference type="Pfam" id="PF01948">
    <property type="entry name" value="PyrI"/>
    <property type="match status" value="1"/>
</dbReference>
<dbReference type="Pfam" id="PF02748">
    <property type="entry name" value="PyrI_C"/>
    <property type="match status" value="1"/>
</dbReference>
<dbReference type="SUPFAM" id="SSF57825">
    <property type="entry name" value="Aspartate carbamoyltransferase, Regulatory-chain, C-terminal domain"/>
    <property type="match status" value="1"/>
</dbReference>
<dbReference type="SUPFAM" id="SSF54893">
    <property type="entry name" value="Aspartate carbamoyltransferase, Regulatory-chain, N-terminal domain"/>
    <property type="match status" value="1"/>
</dbReference>
<gene>
    <name evidence="1" type="primary">pyrI</name>
    <name type="ordered locus">CV_0370</name>
</gene>
<organism>
    <name type="scientific">Chromobacterium violaceum (strain ATCC 12472 / DSM 30191 / JCM 1249 / CCUG 213 / NBRC 12614 / NCIMB 9131 / NCTC 9757 / MK)</name>
    <dbReference type="NCBI Taxonomy" id="243365"/>
    <lineage>
        <taxon>Bacteria</taxon>
        <taxon>Pseudomonadati</taxon>
        <taxon>Pseudomonadota</taxon>
        <taxon>Betaproteobacteria</taxon>
        <taxon>Neisseriales</taxon>
        <taxon>Chromobacteriaceae</taxon>
        <taxon>Chromobacterium</taxon>
    </lineage>
</organism>
<keyword id="KW-0479">Metal-binding</keyword>
<keyword id="KW-0665">Pyrimidine biosynthesis</keyword>
<keyword id="KW-1185">Reference proteome</keyword>
<keyword id="KW-0862">Zinc</keyword>
<name>PYRI_CHRVO</name>
<reference key="1">
    <citation type="journal article" date="2003" name="Proc. Natl. Acad. Sci. U.S.A.">
        <title>The complete genome sequence of Chromobacterium violaceum reveals remarkable and exploitable bacterial adaptability.</title>
        <authorList>
            <person name="Vasconcelos A.T.R."/>
            <person name="de Almeida D.F."/>
            <person name="Hungria M."/>
            <person name="Guimaraes C.T."/>
            <person name="Antonio R.V."/>
            <person name="Almeida F.C."/>
            <person name="de Almeida L.G.P."/>
            <person name="de Almeida R."/>
            <person name="Alves-Gomes J.A."/>
            <person name="Andrade E.M."/>
            <person name="Araripe J."/>
            <person name="de Araujo M.F.F."/>
            <person name="Astolfi-Filho S."/>
            <person name="Azevedo V."/>
            <person name="Baptista A.J."/>
            <person name="Bataus L.A.M."/>
            <person name="Batista J.S."/>
            <person name="Belo A."/>
            <person name="van den Berg C."/>
            <person name="Bogo M."/>
            <person name="Bonatto S."/>
            <person name="Bordignon J."/>
            <person name="Brigido M.M."/>
            <person name="Brito C.A."/>
            <person name="Brocchi M."/>
            <person name="Burity H.A."/>
            <person name="Camargo A.A."/>
            <person name="Cardoso D.D.P."/>
            <person name="Carneiro N.P."/>
            <person name="Carraro D.M."/>
            <person name="Carvalho C.M.B."/>
            <person name="Cascardo J.C.M."/>
            <person name="Cavada B.S."/>
            <person name="Chueire L.M.O."/>
            <person name="Creczynski-Pasa T.B."/>
            <person name="Cunha-Junior N.C."/>
            <person name="Fagundes N."/>
            <person name="Falcao C.L."/>
            <person name="Fantinatti F."/>
            <person name="Farias I.P."/>
            <person name="Felipe M.S.S."/>
            <person name="Ferrari L.P."/>
            <person name="Ferro J.A."/>
            <person name="Ferro M.I.T."/>
            <person name="Franco G.R."/>
            <person name="Freitas N.S.A."/>
            <person name="Furlan L.R."/>
            <person name="Gazzinelli R.T."/>
            <person name="Gomes E.A."/>
            <person name="Goncalves P.R."/>
            <person name="Grangeiro T.B."/>
            <person name="Grattapaglia D."/>
            <person name="Grisard E.C."/>
            <person name="Hanna E.S."/>
            <person name="Jardim S.N."/>
            <person name="Laurino J."/>
            <person name="Leoi L.C.T."/>
            <person name="Lima L.F.A."/>
            <person name="Loureiro M.F."/>
            <person name="Lyra M.C.C.P."/>
            <person name="Madeira H.M.F."/>
            <person name="Manfio G.P."/>
            <person name="Maranhao A.Q."/>
            <person name="Martins W.S."/>
            <person name="di Mauro S.M.Z."/>
            <person name="de Medeiros S.R.B."/>
            <person name="Meissner R.V."/>
            <person name="Moreira M.A.M."/>
            <person name="Nascimento F.F."/>
            <person name="Nicolas M.F."/>
            <person name="Oliveira J.G."/>
            <person name="Oliveira S.C."/>
            <person name="Paixao R.F.C."/>
            <person name="Parente J.A."/>
            <person name="Pedrosa F.O."/>
            <person name="Pena S.D.J."/>
            <person name="Pereira J.O."/>
            <person name="Pereira M."/>
            <person name="Pinto L.S.R.C."/>
            <person name="Pinto L.S."/>
            <person name="Porto J.I.R."/>
            <person name="Potrich D.P."/>
            <person name="Ramalho-Neto C.E."/>
            <person name="Reis A.M.M."/>
            <person name="Rigo L.U."/>
            <person name="Rondinelli E."/>
            <person name="Santos E.B.P."/>
            <person name="Santos F.R."/>
            <person name="Schneider M.P.C."/>
            <person name="Seuanez H.N."/>
            <person name="Silva A.M.R."/>
            <person name="da Silva A.L.C."/>
            <person name="Silva D.W."/>
            <person name="Silva R."/>
            <person name="Simoes I.C."/>
            <person name="Simon D."/>
            <person name="Soares C.M.A."/>
            <person name="Soares R.B.A."/>
            <person name="Souza E.M."/>
            <person name="Souza K.R.L."/>
            <person name="Souza R.C."/>
            <person name="Steffens M.B.R."/>
            <person name="Steindel M."/>
            <person name="Teixeira S.R."/>
            <person name="Urmenyi T."/>
            <person name="Vettore A."/>
            <person name="Wassem R."/>
            <person name="Zaha A."/>
            <person name="Simpson A.J.G."/>
        </authorList>
    </citation>
    <scope>NUCLEOTIDE SEQUENCE [LARGE SCALE GENOMIC DNA]</scope>
    <source>
        <strain>ATCC 12472 / DSM 30191 / JCM 1249 / CCUG 213 / NBRC 12614 / NCIMB 9131 / NCTC 9757 / MK</strain>
    </source>
</reference>
<comment type="function">
    <text evidence="1">Involved in allosteric regulation of aspartate carbamoyltransferase.</text>
</comment>
<comment type="cofactor">
    <cofactor evidence="1">
        <name>Zn(2+)</name>
        <dbReference type="ChEBI" id="CHEBI:29105"/>
    </cofactor>
    <text evidence="1">Binds 1 zinc ion per subunit.</text>
</comment>
<comment type="subunit">
    <text evidence="1">Contains catalytic and regulatory chains.</text>
</comment>
<comment type="similarity">
    <text evidence="1">Belongs to the PyrI family.</text>
</comment>
<feature type="chain" id="PRO_0000142300" description="Aspartate carbamoyltransferase regulatory chain">
    <location>
        <begin position="1"/>
        <end position="152"/>
    </location>
</feature>
<feature type="binding site" evidence="1">
    <location>
        <position position="107"/>
    </location>
    <ligand>
        <name>Zn(2+)</name>
        <dbReference type="ChEBI" id="CHEBI:29105"/>
    </ligand>
</feature>
<feature type="binding site" evidence="1">
    <location>
        <position position="112"/>
    </location>
    <ligand>
        <name>Zn(2+)</name>
        <dbReference type="ChEBI" id="CHEBI:29105"/>
    </ligand>
</feature>
<feature type="binding site" evidence="1">
    <location>
        <position position="136"/>
    </location>
    <ligand>
        <name>Zn(2+)</name>
        <dbReference type="ChEBI" id="CHEBI:29105"/>
    </ligand>
</feature>
<feature type="binding site" evidence="1">
    <location>
        <position position="139"/>
    </location>
    <ligand>
        <name>Zn(2+)</name>
        <dbReference type="ChEBI" id="CHEBI:29105"/>
    </ligand>
</feature>
<accession>Q7P144</accession>
<evidence type="ECO:0000255" key="1">
    <source>
        <dbReference type="HAMAP-Rule" id="MF_00002"/>
    </source>
</evidence>
<sequence length="152" mass="16986">MQYTRTVEALKQGTVIDHIPAGEGVKILRLFKLTETGERVTVGLNLVSRHMGSKDLIKVENVALTEEQANELALFAPKATVNVIDNFEVVKKHKLTLPDAVEGIFSCPNSNCISHNEPVKSVFYVKTLAHDTKMKCKYCEKVFSRDIVAEVR</sequence>
<protein>
    <recommendedName>
        <fullName evidence="1">Aspartate carbamoyltransferase regulatory chain</fullName>
    </recommendedName>
</protein>